<feature type="chain" id="PRO_1000129021" description="Peptidase T">
    <location>
        <begin position="1"/>
        <end position="410"/>
    </location>
</feature>
<feature type="active site" evidence="1">
    <location>
        <position position="81"/>
    </location>
</feature>
<feature type="active site" description="Proton acceptor" evidence="1">
    <location>
        <position position="176"/>
    </location>
</feature>
<feature type="binding site" evidence="1">
    <location>
        <position position="79"/>
    </location>
    <ligand>
        <name>Zn(2+)</name>
        <dbReference type="ChEBI" id="CHEBI:29105"/>
        <label>1</label>
    </ligand>
</feature>
<feature type="binding site" evidence="1">
    <location>
        <position position="142"/>
    </location>
    <ligand>
        <name>Zn(2+)</name>
        <dbReference type="ChEBI" id="CHEBI:29105"/>
        <label>1</label>
    </ligand>
</feature>
<feature type="binding site" evidence="1">
    <location>
        <position position="142"/>
    </location>
    <ligand>
        <name>Zn(2+)</name>
        <dbReference type="ChEBI" id="CHEBI:29105"/>
        <label>2</label>
    </ligand>
</feature>
<feature type="binding site" evidence="1">
    <location>
        <position position="177"/>
    </location>
    <ligand>
        <name>Zn(2+)</name>
        <dbReference type="ChEBI" id="CHEBI:29105"/>
        <label>2</label>
    </ligand>
</feature>
<feature type="binding site" evidence="1">
    <location>
        <position position="199"/>
    </location>
    <ligand>
        <name>Zn(2+)</name>
        <dbReference type="ChEBI" id="CHEBI:29105"/>
        <label>1</label>
    </ligand>
</feature>
<feature type="binding site" evidence="1">
    <location>
        <position position="381"/>
    </location>
    <ligand>
        <name>Zn(2+)</name>
        <dbReference type="ChEBI" id="CHEBI:29105"/>
        <label>2</label>
    </ligand>
</feature>
<dbReference type="EC" id="3.4.11.4" evidence="1"/>
<dbReference type="EMBL" id="CP001186">
    <property type="protein sequence ID" value="ACK98224.1"/>
    <property type="molecule type" value="Genomic_DNA"/>
</dbReference>
<dbReference type="RefSeq" id="WP_000807003.1">
    <property type="nucleotide sequence ID" value="NC_011772.1"/>
</dbReference>
<dbReference type="SMR" id="B7ITJ6"/>
<dbReference type="MEROPS" id="M20.003"/>
<dbReference type="KEGG" id="bcg:BCG9842_B1456"/>
<dbReference type="HOGENOM" id="CLU_053676_0_0_9"/>
<dbReference type="Proteomes" id="UP000006744">
    <property type="component" value="Chromosome"/>
</dbReference>
<dbReference type="GO" id="GO:0005829">
    <property type="term" value="C:cytosol"/>
    <property type="evidence" value="ECO:0007669"/>
    <property type="project" value="TreeGrafter"/>
</dbReference>
<dbReference type="GO" id="GO:0008237">
    <property type="term" value="F:metallopeptidase activity"/>
    <property type="evidence" value="ECO:0007669"/>
    <property type="project" value="UniProtKB-KW"/>
</dbReference>
<dbReference type="GO" id="GO:0045148">
    <property type="term" value="F:tripeptide aminopeptidase activity"/>
    <property type="evidence" value="ECO:0007669"/>
    <property type="project" value="UniProtKB-UniRule"/>
</dbReference>
<dbReference type="GO" id="GO:0008270">
    <property type="term" value="F:zinc ion binding"/>
    <property type="evidence" value="ECO:0007669"/>
    <property type="project" value="UniProtKB-UniRule"/>
</dbReference>
<dbReference type="GO" id="GO:0043171">
    <property type="term" value="P:peptide catabolic process"/>
    <property type="evidence" value="ECO:0007669"/>
    <property type="project" value="UniProtKB-UniRule"/>
</dbReference>
<dbReference type="GO" id="GO:0006508">
    <property type="term" value="P:proteolysis"/>
    <property type="evidence" value="ECO:0007669"/>
    <property type="project" value="UniProtKB-UniRule"/>
</dbReference>
<dbReference type="CDD" id="cd03892">
    <property type="entry name" value="M20_peptT"/>
    <property type="match status" value="1"/>
</dbReference>
<dbReference type="FunFam" id="3.30.70.360:FF:000002">
    <property type="entry name" value="Peptidase T"/>
    <property type="match status" value="1"/>
</dbReference>
<dbReference type="Gene3D" id="3.30.70.360">
    <property type="match status" value="1"/>
</dbReference>
<dbReference type="Gene3D" id="3.40.630.10">
    <property type="entry name" value="Zn peptidases"/>
    <property type="match status" value="1"/>
</dbReference>
<dbReference type="HAMAP" id="MF_00550">
    <property type="entry name" value="Aminopeptidase_M20"/>
    <property type="match status" value="1"/>
</dbReference>
<dbReference type="InterPro" id="IPR001261">
    <property type="entry name" value="ArgE/DapE_CS"/>
</dbReference>
<dbReference type="InterPro" id="IPR036264">
    <property type="entry name" value="Bact_exopeptidase_dim_dom"/>
</dbReference>
<dbReference type="InterPro" id="IPR002933">
    <property type="entry name" value="Peptidase_M20"/>
</dbReference>
<dbReference type="InterPro" id="IPR011650">
    <property type="entry name" value="Peptidase_M20_dimer"/>
</dbReference>
<dbReference type="InterPro" id="IPR010161">
    <property type="entry name" value="Peptidase_M20B"/>
</dbReference>
<dbReference type="NCBIfam" id="TIGR01882">
    <property type="entry name" value="peptidase-T"/>
    <property type="match status" value="1"/>
</dbReference>
<dbReference type="NCBIfam" id="NF003976">
    <property type="entry name" value="PRK05469.1"/>
    <property type="match status" value="1"/>
</dbReference>
<dbReference type="NCBIfam" id="NF009920">
    <property type="entry name" value="PRK13381.1"/>
    <property type="match status" value="1"/>
</dbReference>
<dbReference type="PANTHER" id="PTHR42994">
    <property type="entry name" value="PEPTIDASE T"/>
    <property type="match status" value="1"/>
</dbReference>
<dbReference type="PANTHER" id="PTHR42994:SF1">
    <property type="entry name" value="PEPTIDASE T"/>
    <property type="match status" value="1"/>
</dbReference>
<dbReference type="Pfam" id="PF07687">
    <property type="entry name" value="M20_dimer"/>
    <property type="match status" value="1"/>
</dbReference>
<dbReference type="Pfam" id="PF01546">
    <property type="entry name" value="Peptidase_M20"/>
    <property type="match status" value="1"/>
</dbReference>
<dbReference type="PIRSF" id="PIRSF037215">
    <property type="entry name" value="Peptidase_M20B"/>
    <property type="match status" value="1"/>
</dbReference>
<dbReference type="SUPFAM" id="SSF55031">
    <property type="entry name" value="Bacterial exopeptidase dimerisation domain"/>
    <property type="match status" value="1"/>
</dbReference>
<dbReference type="SUPFAM" id="SSF53187">
    <property type="entry name" value="Zn-dependent exopeptidases"/>
    <property type="match status" value="1"/>
</dbReference>
<dbReference type="PROSITE" id="PS00758">
    <property type="entry name" value="ARGE_DAPE_CPG2_1"/>
    <property type="match status" value="1"/>
</dbReference>
<dbReference type="PROSITE" id="PS00759">
    <property type="entry name" value="ARGE_DAPE_CPG2_2"/>
    <property type="match status" value="1"/>
</dbReference>
<organism>
    <name type="scientific">Bacillus cereus (strain G9842)</name>
    <dbReference type="NCBI Taxonomy" id="405531"/>
    <lineage>
        <taxon>Bacteria</taxon>
        <taxon>Bacillati</taxon>
        <taxon>Bacillota</taxon>
        <taxon>Bacilli</taxon>
        <taxon>Bacillales</taxon>
        <taxon>Bacillaceae</taxon>
        <taxon>Bacillus</taxon>
        <taxon>Bacillus cereus group</taxon>
    </lineage>
</organism>
<name>PEPT_BACC2</name>
<keyword id="KW-0031">Aminopeptidase</keyword>
<keyword id="KW-0963">Cytoplasm</keyword>
<keyword id="KW-0378">Hydrolase</keyword>
<keyword id="KW-0479">Metal-binding</keyword>
<keyword id="KW-0482">Metalloprotease</keyword>
<keyword id="KW-0645">Protease</keyword>
<keyword id="KW-0862">Zinc</keyword>
<reference key="1">
    <citation type="submission" date="2008-10" db="EMBL/GenBank/DDBJ databases">
        <title>Genome sequence of Bacillus cereus G9842.</title>
        <authorList>
            <person name="Dodson R.J."/>
            <person name="Durkin A.S."/>
            <person name="Rosovitz M.J."/>
            <person name="Rasko D.A."/>
            <person name="Hoffmaster A."/>
            <person name="Ravel J."/>
            <person name="Sutton G."/>
        </authorList>
    </citation>
    <scope>NUCLEOTIDE SEQUENCE [LARGE SCALE GENOMIC DNA]</scope>
    <source>
        <strain>G9842</strain>
    </source>
</reference>
<protein>
    <recommendedName>
        <fullName evidence="1">Peptidase T</fullName>
        <ecNumber evidence="1">3.4.11.4</ecNumber>
    </recommendedName>
    <alternativeName>
        <fullName evidence="1">Aminotripeptidase</fullName>
        <shortName evidence="1">Tripeptidase</shortName>
    </alternativeName>
    <alternativeName>
        <fullName evidence="1">Tripeptide aminopeptidase</fullName>
    </alternativeName>
</protein>
<gene>
    <name evidence="1" type="primary">pepT</name>
    <name type="ordered locus">BCG9842_B1456</name>
</gene>
<accession>B7ITJ6</accession>
<evidence type="ECO:0000255" key="1">
    <source>
        <dbReference type="HAMAP-Rule" id="MF_00550"/>
    </source>
</evidence>
<proteinExistence type="inferred from homology"/>
<comment type="function">
    <text evidence="1">Cleaves the N-terminal amino acid of tripeptides.</text>
</comment>
<comment type="catalytic activity">
    <reaction evidence="1">
        <text>Release of the N-terminal residue from a tripeptide.</text>
        <dbReference type="EC" id="3.4.11.4"/>
    </reaction>
</comment>
<comment type="cofactor">
    <cofactor evidence="1">
        <name>Zn(2+)</name>
        <dbReference type="ChEBI" id="CHEBI:29105"/>
    </cofactor>
    <text evidence="1">Binds 2 Zn(2+) ions per subunit.</text>
</comment>
<comment type="subcellular location">
    <subcellularLocation>
        <location evidence="1">Cytoplasm</location>
    </subcellularLocation>
</comment>
<comment type="similarity">
    <text evidence="1">Belongs to the peptidase M20B family.</text>
</comment>
<sequence length="410" mass="45871">MKQELIERFTRYVKIDTQSNEESHTVPTTPGQIEFGKLLVEELKEIGLTEVMMDDNGYVMATLPANTDKDVPVIGFLAHLDTATDFTGKNVKPQIHENFDGNAITLNEELNVVLTPEQFPELPSYKGHTIITTDGTTLLGADDKAGLTEIMVAMNHLIHNPQIKHGKIRVAFTPDEEIGRGPAHFDVEAFGASFAYTMDGGPLGGLEYESFNAAGAKLTFNGTNTHPGTAKNKMRNATKLAMEFNGHLPVEEAPEYTEGYEGFYHLLSLNGDVEQSKAYYIVRDFDRENFEARKNNVKNIVKNMQEKYGEDAVVLEMNDQYYNMLEKIEPVREIVDIAYEAMKSLDIEPNIHPIRGGTDGSQLSYMGLPTPNIFTGGENYHGKFEYVSVDNMEKAVQVIVEIARRFEEQA</sequence>